<sequence length="761" mass="88050">MWRLKIADGNNNPYLYSTNNFVGRQTWEFDPNYGTQEERDEVEQARQHFWNNRHQFKATGDVLWRMQFIREKRFKQTIPQVKIEDGEEISYDKVTATLRRSVHLLAALQADDGHWPAENTGPMFFIQPLVICLYITGHLDRVFPKEHKKEILRYLYTQQNEDGGWGLHIEGQSIMFGTIMSYVCMRLLGEGPDGGLNGACTKARKWILDHGSVLASPSWGKIYLTILGVHEWEGCNPLPPEFWILPSIFPMHPAKMWCYCRLIYMPMSYLYGRRFVGPITPLVLQLREELYSQSYNDIKWKSTRHLVVKEDLHYPHPWLQDLMWDGLYIFTEPLLTRWPFSKLREKALKTTINHIHYEDENSRYITIGAVEKSLCMLACWDEDPDGVCFKKHLARIPDYIWVSEDGLKMQSFGSQLWDASLAIQALLATDLNHDIEPILRKGHDFIKASQVKDNPSGDFKSMYRHITKGSWTFSDQDHGWQTSDCTTEGLKCCLLLSKMSAEIVGEKMQPEQFYDAVNLILSLQCKNGGEAGWEPAGESNWLEFLNPSELFEDIVLEHDSVECTATGMQALVIFKKLYPKHRREEIEKFLKDACGYLEKVQMQDGSWYGEWGICFTYGTCFALGGMEAIGKTYENCEAIRRAVNFLLTTQRNDGGWGESYRSSPKKKYVPLEGNRSNLVQTACALMGLIRSKQEERDPTPLHRAAKLLINSQMENGDFPQEETGGVFKKNCLLHYPMYRNIYTLWALGEYRKKVLPQPTKV</sequence>
<name>STBOS_STERE</name>
<evidence type="ECO:0000250" key="1">
    <source>
        <dbReference type="UniProtKB" id="P48449"/>
    </source>
</evidence>
<evidence type="ECO:0000269" key="2">
    <source>
    </source>
</evidence>
<evidence type="ECO:0000305" key="3"/>
<organism>
    <name type="scientific">Stevia rebaudiana</name>
    <name type="common">Stevia</name>
    <name type="synonym">Eupatorium rebaudianum</name>
    <dbReference type="NCBI Taxonomy" id="55670"/>
    <lineage>
        <taxon>Eukaryota</taxon>
        <taxon>Viridiplantae</taxon>
        <taxon>Streptophyta</taxon>
        <taxon>Embryophyta</taxon>
        <taxon>Tracheophyta</taxon>
        <taxon>Spermatophyta</taxon>
        <taxon>Magnoliopsida</taxon>
        <taxon>eudicotyledons</taxon>
        <taxon>Gunneridae</taxon>
        <taxon>Pentapetalae</taxon>
        <taxon>asterids</taxon>
        <taxon>campanulids</taxon>
        <taxon>Asterales</taxon>
        <taxon>Asteraceae</taxon>
        <taxon>Asteroideae</taxon>
        <taxon>Heliantheae alliance</taxon>
        <taxon>Eupatorieae</taxon>
        <taxon>Stevia</taxon>
    </lineage>
</organism>
<reference key="1">
    <citation type="journal article" date="2008" name="Org. Lett.">
        <title>Biosynthesis of baccharis oxide, a triterpene with a 3,10-oxide bridge in the A-ring.</title>
        <authorList>
            <person name="Shibuya M."/>
            <person name="Sagara A."/>
            <person name="Saitoh A."/>
            <person name="Kushiro T."/>
            <person name="Ebizuka Y."/>
        </authorList>
    </citation>
    <scope>NUCLEOTIDE SEQUENCE [MRNA]</scope>
    <scope>FUNCTION</scope>
    <scope>CATALYTIC ACTIVITY</scope>
    <source>
        <tissue>Root</tissue>
    </source>
</reference>
<protein>
    <recommendedName>
        <fullName>Baccharis oxide synthase</fullName>
        <shortName>StrBOS</shortName>
        <ecNumber>5.4.99.51</ecNumber>
    </recommendedName>
</protein>
<proteinExistence type="evidence at protein level"/>
<accession>B9X0J1</accession>
<comment type="function">
    <text evidence="2">Oxidosqualene cyclase converting (3S)-2,3-epoxy-2,3-dihydrosqualene to baccharis oxide, a triterpene with a 3,10-oxide bridge in the A-ring. Also mediates conversion of other triterpenoids at a much lower level.</text>
</comment>
<comment type="catalytic activity">
    <reaction evidence="2">
        <text>(S)-2,3-epoxysqualene = baccharis oxide</text>
        <dbReference type="Rhea" id="RHEA:31867"/>
        <dbReference type="ChEBI" id="CHEBI:15441"/>
        <dbReference type="ChEBI" id="CHEBI:63463"/>
        <dbReference type="EC" id="5.4.99.51"/>
    </reaction>
</comment>
<comment type="similarity">
    <text evidence="3">Belongs to the terpene cyclase/mutase family.</text>
</comment>
<dbReference type="EC" id="5.4.99.51"/>
<dbReference type="EMBL" id="AB455264">
    <property type="protein sequence ID" value="BAH23676.1"/>
    <property type="molecule type" value="mRNA"/>
</dbReference>
<dbReference type="SMR" id="B9X0J1"/>
<dbReference type="KEGG" id="ag:BAH23676"/>
<dbReference type="GO" id="GO:0005811">
    <property type="term" value="C:lipid droplet"/>
    <property type="evidence" value="ECO:0007669"/>
    <property type="project" value="InterPro"/>
</dbReference>
<dbReference type="GO" id="GO:0042300">
    <property type="term" value="F:beta-amyrin synthase activity"/>
    <property type="evidence" value="ECO:0007669"/>
    <property type="project" value="TreeGrafter"/>
</dbReference>
<dbReference type="GO" id="GO:0031559">
    <property type="term" value="F:oxidosqualene cyclase activity"/>
    <property type="evidence" value="ECO:0000314"/>
    <property type="project" value="UniProtKB"/>
</dbReference>
<dbReference type="GO" id="GO:0016104">
    <property type="term" value="P:triterpenoid biosynthetic process"/>
    <property type="evidence" value="ECO:0007669"/>
    <property type="project" value="InterPro"/>
</dbReference>
<dbReference type="CDD" id="cd02892">
    <property type="entry name" value="SQCY_1"/>
    <property type="match status" value="1"/>
</dbReference>
<dbReference type="FunFam" id="1.50.10.20:FF:000044">
    <property type="entry name" value="Lupeol synthase"/>
    <property type="match status" value="1"/>
</dbReference>
<dbReference type="FunFam" id="1.50.10.20:FF:000011">
    <property type="entry name" value="Terpene cyclase/mutase family member"/>
    <property type="match status" value="1"/>
</dbReference>
<dbReference type="Gene3D" id="1.50.10.20">
    <property type="match status" value="2"/>
</dbReference>
<dbReference type="InterPro" id="IPR032696">
    <property type="entry name" value="SQ_cyclase_C"/>
</dbReference>
<dbReference type="InterPro" id="IPR032697">
    <property type="entry name" value="SQ_cyclase_N"/>
</dbReference>
<dbReference type="InterPro" id="IPR018333">
    <property type="entry name" value="Squalene_cyclase"/>
</dbReference>
<dbReference type="InterPro" id="IPR002365">
    <property type="entry name" value="Terpene_synthase_CS"/>
</dbReference>
<dbReference type="InterPro" id="IPR008930">
    <property type="entry name" value="Terpenoid_cyclase/PrenylTrfase"/>
</dbReference>
<dbReference type="NCBIfam" id="TIGR01787">
    <property type="entry name" value="squalene_cyclas"/>
    <property type="match status" value="1"/>
</dbReference>
<dbReference type="PANTHER" id="PTHR11764:SF58">
    <property type="entry name" value="BETA-AMYRIN SYNTHASE-RELATED"/>
    <property type="match status" value="1"/>
</dbReference>
<dbReference type="PANTHER" id="PTHR11764">
    <property type="entry name" value="TERPENE CYCLASE/MUTASE FAMILY MEMBER"/>
    <property type="match status" value="1"/>
</dbReference>
<dbReference type="Pfam" id="PF13243">
    <property type="entry name" value="SQHop_cyclase_C"/>
    <property type="match status" value="1"/>
</dbReference>
<dbReference type="Pfam" id="PF13249">
    <property type="entry name" value="SQHop_cyclase_N"/>
    <property type="match status" value="1"/>
</dbReference>
<dbReference type="SFLD" id="SFLDG01016">
    <property type="entry name" value="Prenyltransferase_Like_2"/>
    <property type="match status" value="1"/>
</dbReference>
<dbReference type="SUPFAM" id="SSF48239">
    <property type="entry name" value="Terpenoid cyclases/Protein prenyltransferases"/>
    <property type="match status" value="2"/>
</dbReference>
<dbReference type="PROSITE" id="PS01074">
    <property type="entry name" value="TERPENE_SYNTHASES"/>
    <property type="match status" value="1"/>
</dbReference>
<keyword id="KW-0413">Isomerase</keyword>
<keyword id="KW-0677">Repeat</keyword>
<feature type="chain" id="PRO_0000418758" description="Baccharis oxide synthase">
    <location>
        <begin position="1"/>
        <end position="761"/>
    </location>
</feature>
<feature type="repeat" description="PFTB 1">
    <location>
        <begin position="148"/>
        <end position="189"/>
    </location>
</feature>
<feature type="repeat" description="PFTB 2">
    <location>
        <begin position="639"/>
        <end position="680"/>
    </location>
</feature>
<feature type="active site" description="Proton donor" evidence="1">
    <location>
        <position position="484"/>
    </location>
</feature>